<accession>P0DOH6</accession>
<comment type="function">
    <text evidence="1">Plays a role in viral particle release. Presumably acts by facilitating the fission of the virion bud at the cell surface. May prevent the antiviral activity of murine APOBEC3.</text>
</comment>
<comment type="subcellular location">
    <subcellularLocation>
        <location evidence="1 2">Host cell membrane</location>
        <topology evidence="1">Single-pass membrane protein</topology>
    </subcellularLocation>
</comment>
<comment type="alternative products">
    <event type="alternative initiation"/>
    <isoform>
        <id>P0DOH6-1</id>
        <name>Glyco-Gag protein</name>
        <sequence type="displayed"/>
    </isoform>
    <isoform>
        <id>P26805-1</id>
        <name>Gag polyprotein</name>
        <sequence type="external"/>
    </isoform>
</comment>
<comment type="PTM">
    <text evidence="1">Glycosylated by host.</text>
</comment>
<comment type="PTM">
    <text evidence="1">Cleaved by host near the middle of the molecule, releasing the c-terminal half containing capsid and nucleoprotein domains op GAG.</text>
</comment>
<organismHost>
    <name type="scientific">Mus musculus</name>
    <name type="common">Mouse</name>
    <dbReference type="NCBI Taxonomy" id="10090"/>
</organismHost>
<name>GGAG_MLVFP</name>
<feature type="chain" id="PRO_0000441140" description="Glyco-Gag protein">
    <location>
        <begin position="1"/>
        <end position="626"/>
    </location>
</feature>
<feature type="topological domain" description="Cytoplasmic" evidence="6">
    <location>
        <begin position="1"/>
        <end position="67"/>
    </location>
</feature>
<feature type="transmembrane region" description="Helical" evidence="2">
    <location>
        <begin position="68"/>
        <end position="86"/>
    </location>
</feature>
<feature type="topological domain" description="Extracellular" evidence="6">
    <location>
        <begin position="87"/>
        <end position="626"/>
    </location>
</feature>
<feature type="zinc finger region" description="CCHC-type" evidence="3">
    <location>
        <begin position="590"/>
        <end position="607"/>
    </location>
</feature>
<feature type="region of interest" description="Disordered" evidence="5">
    <location>
        <begin position="199"/>
        <end position="306"/>
    </location>
</feature>
<feature type="region of interest" description="Disordered" evidence="5">
    <location>
        <begin position="522"/>
        <end position="626"/>
    </location>
</feature>
<feature type="compositionally biased region" description="Pro residues" evidence="5">
    <location>
        <begin position="199"/>
        <end position="212"/>
    </location>
</feature>
<feature type="compositionally biased region" description="Pro residues" evidence="5">
    <location>
        <begin position="249"/>
        <end position="261"/>
    </location>
</feature>
<feature type="compositionally biased region" description="Basic and acidic residues" evidence="5">
    <location>
        <begin position="522"/>
        <end position="554"/>
    </location>
</feature>
<feature type="compositionally biased region" description="Basic and acidic residues" evidence="5">
    <location>
        <begin position="574"/>
        <end position="607"/>
    </location>
</feature>
<feature type="glycosylation site" description="N-linked (GlcNAc...) asparagine; by host" evidence="4">
    <location>
        <position position="113"/>
    </location>
</feature>
<feature type="glycosylation site" description="N-linked (GlcNAc...) asparagine; by host" evidence="4">
    <location>
        <position position="480"/>
    </location>
</feature>
<proteinExistence type="inferred from homology"/>
<keyword id="KW-0024">Alternative initiation</keyword>
<keyword id="KW-0325">Glycoprotein</keyword>
<keyword id="KW-1032">Host cell membrane</keyword>
<keyword id="KW-1043">Host membrane</keyword>
<keyword id="KW-0472">Membrane</keyword>
<keyword id="KW-0479">Metal-binding</keyword>
<keyword id="KW-0812">Transmembrane</keyword>
<keyword id="KW-1133">Transmembrane helix</keyword>
<keyword id="KW-0862">Zinc</keyword>
<keyword id="KW-0863">Zinc-finger</keyword>
<evidence type="ECO:0000250" key="1">
    <source>
        <dbReference type="UniProtKB" id="P0DOG8"/>
    </source>
</evidence>
<evidence type="ECO:0000255" key="2"/>
<evidence type="ECO:0000255" key="3">
    <source>
        <dbReference type="PROSITE-ProRule" id="PRU00047"/>
    </source>
</evidence>
<evidence type="ECO:0000255" key="4">
    <source>
        <dbReference type="PROSITE-ProRule" id="PRU00498"/>
    </source>
</evidence>
<evidence type="ECO:0000256" key="5">
    <source>
        <dbReference type="SAM" id="MobiDB-lite"/>
    </source>
</evidence>
<evidence type="ECO:0000305" key="6"/>
<organism>
    <name type="scientific">Friend murine leukemia virus (isolate PVC-211)</name>
    <name type="common">FrMLV</name>
    <dbReference type="NCBI Taxonomy" id="11798"/>
    <lineage>
        <taxon>Viruses</taxon>
        <taxon>Riboviria</taxon>
        <taxon>Pararnavirae</taxon>
        <taxon>Artverviricota</taxon>
        <taxon>Revtraviricetes</taxon>
        <taxon>Ortervirales</taxon>
        <taxon>Retroviridae</taxon>
        <taxon>Orthoretrovirinae</taxon>
        <taxon>Gammaretrovirus</taxon>
        <taxon>Murine leukemia virus</taxon>
    </lineage>
</organism>
<reference key="1">
    <citation type="journal article" date="1992" name="Nucleic Acids Res.">
        <title>Complete nucleotide sequence of a neuropathogenic variant of Friend murine leukemia virus PVC-211.</title>
        <authorList>
            <person name="Remington M.P."/>
            <person name="Hoffman P.M."/>
            <person name="Ruscetti S.K."/>
            <person name="Masuda M."/>
        </authorList>
    </citation>
    <scope>NUCLEOTIDE SEQUENCE [GENOMIC RNA]</scope>
</reference>
<sequence>LGDVPGTSGAIFVARPESNYPDRFGLFGAPPLEEGYVILVGDGRLKRFPPPSEFLLSVWSRSRAARPVCCSIVLCCFCLTVFLYLSENMGQTATTPLSLTLDHWKDVERTAHNQSVEVRKRRWVTFCSAEWPTFNVGWPRDGTFNPDIITQVKIKVFSPGPHGHPDQVPYIVTWEALAVDPPPWVKPFVHPKPPLLLPPSAPSLPPEPPLSTPPQSSLYPALTSPLNTKPRPQVLPDSGGPLIDLLTEDPPPYRDPGPPSPDGKGDSGEVAPTEGAPDSSPMVSRLRGRREPPVADSTTSQAFPLRLGGNGQFQYWPFSSSDLYNWKNNNPSFSEDPGKLTALIESVLLTHQPTWDDCQQLLGTLLTGEEKQRVLLEARKAVRGEDGRPTQLPNDINDAFPLERPDWDYNTQRGRNHLVHYRQLLLAGLQNAGRSPTNLAKVKGITQGPNESPSAFLERLKEAYRRYTPYDPEDPGQETNVSMSFIWQSAPDIGRKLERLEDLKNKTLGDLVREAEKIFNKRETPEEREERVRRETEEKEERRRAEDERREKERDRRRHREMSKLLATVVSGQRQDRQGGERRRPQLDHDQCAYCKEKGHWARDCPKKPRGPRGPRPQASLLTLDD</sequence>
<dbReference type="EMBL" id="M93134">
    <property type="status" value="NOT_ANNOTATED_CDS"/>
    <property type="molecule type" value="Genomic_RNA"/>
</dbReference>
<dbReference type="SMR" id="P0DOH6"/>
<dbReference type="Proteomes" id="UP000007777">
    <property type="component" value="Genome"/>
</dbReference>
<dbReference type="GO" id="GO:0020002">
    <property type="term" value="C:host cell plasma membrane"/>
    <property type="evidence" value="ECO:0007669"/>
    <property type="project" value="UniProtKB-SubCell"/>
</dbReference>
<dbReference type="GO" id="GO:0016020">
    <property type="term" value="C:membrane"/>
    <property type="evidence" value="ECO:0007669"/>
    <property type="project" value="UniProtKB-KW"/>
</dbReference>
<dbReference type="GO" id="GO:0003676">
    <property type="term" value="F:nucleic acid binding"/>
    <property type="evidence" value="ECO:0007669"/>
    <property type="project" value="InterPro"/>
</dbReference>
<dbReference type="GO" id="GO:0008270">
    <property type="term" value="F:zinc ion binding"/>
    <property type="evidence" value="ECO:0007669"/>
    <property type="project" value="UniProtKB-KW"/>
</dbReference>
<dbReference type="GO" id="GO:0019068">
    <property type="term" value="P:virion assembly"/>
    <property type="evidence" value="ECO:0007669"/>
    <property type="project" value="InterPro"/>
</dbReference>
<dbReference type="Gene3D" id="1.10.150.180">
    <property type="entry name" value="Gamma-retroviral matrix domain"/>
    <property type="match status" value="1"/>
</dbReference>
<dbReference type="Gene3D" id="1.10.375.10">
    <property type="entry name" value="Human Immunodeficiency Virus Type 1 Capsid Protein"/>
    <property type="match status" value="1"/>
</dbReference>
<dbReference type="Gene3D" id="4.10.60.10">
    <property type="entry name" value="Zinc finger, CCHC-type"/>
    <property type="match status" value="1"/>
</dbReference>
<dbReference type="InterPro" id="IPR000840">
    <property type="entry name" value="G_retro_matrix"/>
</dbReference>
<dbReference type="InterPro" id="IPR036946">
    <property type="entry name" value="G_retro_matrix_sf"/>
</dbReference>
<dbReference type="InterPro" id="IPR002079">
    <property type="entry name" value="Gag_p12"/>
</dbReference>
<dbReference type="InterPro" id="IPR003036">
    <property type="entry name" value="Gag_P30"/>
</dbReference>
<dbReference type="InterPro" id="IPR008919">
    <property type="entry name" value="Retrov_capsid_N"/>
</dbReference>
<dbReference type="InterPro" id="IPR050462">
    <property type="entry name" value="Retroviral_Gag-Pol_poly"/>
</dbReference>
<dbReference type="InterPro" id="IPR010999">
    <property type="entry name" value="Retrovr_matrix"/>
</dbReference>
<dbReference type="InterPro" id="IPR001878">
    <property type="entry name" value="Znf_CCHC"/>
</dbReference>
<dbReference type="InterPro" id="IPR036875">
    <property type="entry name" value="Znf_CCHC_sf"/>
</dbReference>
<dbReference type="PANTHER" id="PTHR33166">
    <property type="entry name" value="GAG_P30 DOMAIN-CONTAINING PROTEIN"/>
    <property type="match status" value="1"/>
</dbReference>
<dbReference type="Pfam" id="PF01140">
    <property type="entry name" value="Gag_MA"/>
    <property type="match status" value="1"/>
</dbReference>
<dbReference type="Pfam" id="PF01141">
    <property type="entry name" value="Gag_p12"/>
    <property type="match status" value="1"/>
</dbReference>
<dbReference type="Pfam" id="PF02093">
    <property type="entry name" value="Gag_p30"/>
    <property type="match status" value="1"/>
</dbReference>
<dbReference type="Pfam" id="PF00098">
    <property type="entry name" value="zf-CCHC"/>
    <property type="match status" value="1"/>
</dbReference>
<dbReference type="SMART" id="SM00343">
    <property type="entry name" value="ZnF_C2HC"/>
    <property type="match status" value="1"/>
</dbReference>
<dbReference type="SUPFAM" id="SSF47836">
    <property type="entry name" value="Retroviral matrix proteins"/>
    <property type="match status" value="1"/>
</dbReference>
<dbReference type="SUPFAM" id="SSF47943">
    <property type="entry name" value="Retrovirus capsid protein, N-terminal core domain"/>
    <property type="match status" value="1"/>
</dbReference>
<dbReference type="SUPFAM" id="SSF57756">
    <property type="entry name" value="Retrovirus zinc finger-like domains"/>
    <property type="match status" value="1"/>
</dbReference>
<dbReference type="PROSITE" id="PS50158">
    <property type="entry name" value="ZF_CCHC"/>
    <property type="match status" value="1"/>
</dbReference>
<protein>
    <recommendedName>
        <fullName>Glyco-Gag protein</fullName>
    </recommendedName>
    <alternativeName>
        <fullName>Gross cell surface antigen</fullName>
    </alternativeName>
    <alternativeName>
        <fullName>glycosylated Pr80 gag</fullName>
        <shortName>gPr80 Gag</shortName>
        <shortName>gag-gPr80</shortName>
    </alternativeName>
</protein>